<evidence type="ECO:0000255" key="1">
    <source>
        <dbReference type="HAMAP-Rule" id="MF_01411"/>
    </source>
</evidence>
<evidence type="ECO:0000256" key="2">
    <source>
        <dbReference type="SAM" id="MobiDB-lite"/>
    </source>
</evidence>
<accession>Q1LRA4</accession>
<sequence>MTEQRRSPHHPATRPPAPPGTSRRVRLPASALRPLVLAMAGLTVSAHAQYGATSAIPNIDLVEPVVTQTPEAPPPPAEGGDLVPRLTEPATRTAPSGNTLNLSPSSTPSNPNAPAYVSGDRVTGYSEKGVEMEGHAELRRDGGVIKGDRLTYDQDTDEAHATGNVRLSKSGTLAVGPEARMRVQANEGYMLSPDYYFQQTGGSGSAERVDFLDPDRSTLKKATYTTCSPDNADWYFSARKLDLDSDRQVGTAYGGVLNFFGVPIAGAPAFSFPLNGERRSGVLPPLFGYGSNSGADLTVPYYFNLAPNRDLTIYPRILTSRGVQLGEDFRYVGDGYSGRIRGEFLPDDKKAGRNRWAYSIQHYQSIIPGMTAYVNVSKVSDDKYPDDLTRSVSQSTLRQYTQEGGVIYAWQDWVFMARVQKFQTLLPSEPSYEREPQLNAKYNRYDFHGFDISLETDYTRFRIPLTSTGFQQPEGNRAFIQPTISYPIIHPGWYVTPKFIFNAAQYNMDAGTNTTGASNTLNRAIPTVSLDSGMTFERDAPGVSKLFGVKYTQTLEPRLFYVYTPFYDQSQFPLFDTVQSDFGYGQIFTENPFTGNDRIADNNKLTLGLTTRLIESETGVERFRGTIAQRVDFTGQRVQLNGTLPDAKPSYSDLLAATTIQLFRGYYLDAGIQWNPDQDKVNYSNVALAYRPESRKLINFGYRYRRPTSVTDNTAIDQIEMSGQWPITQRTYGIGRVAFDKSANQLVDALAGFEYAADCWVGRFVYQRFRNTSNGYTGRVFFQVEFRGLSKIGSNPLDMLRLNVPGYEPVTARPVPTTPYDHYE</sequence>
<reference key="1">
    <citation type="journal article" date="2010" name="PLoS ONE">
        <title>The complete genome sequence of Cupriavidus metallidurans strain CH34, a master survivalist in harsh and anthropogenic environments.</title>
        <authorList>
            <person name="Janssen P.J."/>
            <person name="Van Houdt R."/>
            <person name="Moors H."/>
            <person name="Monsieurs P."/>
            <person name="Morin N."/>
            <person name="Michaux A."/>
            <person name="Benotmane M.A."/>
            <person name="Leys N."/>
            <person name="Vallaeys T."/>
            <person name="Lapidus A."/>
            <person name="Monchy S."/>
            <person name="Medigue C."/>
            <person name="Taghavi S."/>
            <person name="McCorkle S."/>
            <person name="Dunn J."/>
            <person name="van der Lelie D."/>
            <person name="Mergeay M."/>
        </authorList>
    </citation>
    <scope>NUCLEOTIDE SEQUENCE [LARGE SCALE GENOMIC DNA]</scope>
    <source>
        <strain>ATCC 43123 / DSM 2839 / NBRC 102507 / CH34</strain>
    </source>
</reference>
<organism>
    <name type="scientific">Cupriavidus metallidurans (strain ATCC 43123 / DSM 2839 / NBRC 102507 / CH34)</name>
    <name type="common">Ralstonia metallidurans</name>
    <dbReference type="NCBI Taxonomy" id="266264"/>
    <lineage>
        <taxon>Bacteria</taxon>
        <taxon>Pseudomonadati</taxon>
        <taxon>Pseudomonadota</taxon>
        <taxon>Betaproteobacteria</taxon>
        <taxon>Burkholderiales</taxon>
        <taxon>Burkholderiaceae</taxon>
        <taxon>Cupriavidus</taxon>
    </lineage>
</organism>
<proteinExistence type="inferred from homology"/>
<name>LPTD_CUPMC</name>
<comment type="function">
    <text evidence="1">Together with LptE, is involved in the assembly of lipopolysaccharide (LPS) at the surface of the outer membrane.</text>
</comment>
<comment type="subunit">
    <text evidence="1">Component of the lipopolysaccharide transport and assembly complex. Interacts with LptE and LptA.</text>
</comment>
<comment type="subcellular location">
    <subcellularLocation>
        <location evidence="1">Cell outer membrane</location>
    </subcellularLocation>
</comment>
<comment type="similarity">
    <text evidence="1">Belongs to the LptD family.</text>
</comment>
<keyword id="KW-0998">Cell outer membrane</keyword>
<keyword id="KW-0472">Membrane</keyword>
<keyword id="KW-1185">Reference proteome</keyword>
<keyword id="KW-0732">Signal</keyword>
<dbReference type="EMBL" id="CP000352">
    <property type="protein sequence ID" value="ABF07322.1"/>
    <property type="molecule type" value="Genomic_DNA"/>
</dbReference>
<dbReference type="RefSeq" id="WP_011515310.1">
    <property type="nucleotide sequence ID" value="NC_007973.1"/>
</dbReference>
<dbReference type="SMR" id="Q1LRA4"/>
<dbReference type="STRING" id="266264.Rmet_0436"/>
<dbReference type="KEGG" id="rme:Rmet_0436"/>
<dbReference type="eggNOG" id="COG1452">
    <property type="taxonomic scope" value="Bacteria"/>
</dbReference>
<dbReference type="HOGENOM" id="CLU_009039_0_0_4"/>
<dbReference type="Proteomes" id="UP000002429">
    <property type="component" value="Chromosome"/>
</dbReference>
<dbReference type="GO" id="GO:0009279">
    <property type="term" value="C:cell outer membrane"/>
    <property type="evidence" value="ECO:0007669"/>
    <property type="project" value="UniProtKB-SubCell"/>
</dbReference>
<dbReference type="GO" id="GO:1990351">
    <property type="term" value="C:transporter complex"/>
    <property type="evidence" value="ECO:0007669"/>
    <property type="project" value="TreeGrafter"/>
</dbReference>
<dbReference type="GO" id="GO:0043165">
    <property type="term" value="P:Gram-negative-bacterium-type cell outer membrane assembly"/>
    <property type="evidence" value="ECO:0007669"/>
    <property type="project" value="UniProtKB-UniRule"/>
</dbReference>
<dbReference type="GO" id="GO:0015920">
    <property type="term" value="P:lipopolysaccharide transport"/>
    <property type="evidence" value="ECO:0007669"/>
    <property type="project" value="InterPro"/>
</dbReference>
<dbReference type="Gene3D" id="2.60.450.10">
    <property type="entry name" value="Lipopolysaccharide (LPS) transport protein A like domain"/>
    <property type="match status" value="1"/>
</dbReference>
<dbReference type="HAMAP" id="MF_01411">
    <property type="entry name" value="LPS_assembly_LptD"/>
    <property type="match status" value="1"/>
</dbReference>
<dbReference type="InterPro" id="IPR020889">
    <property type="entry name" value="LipoPS_assembly_LptD"/>
</dbReference>
<dbReference type="InterPro" id="IPR050218">
    <property type="entry name" value="LptD"/>
</dbReference>
<dbReference type="InterPro" id="IPR007543">
    <property type="entry name" value="LptD_C"/>
</dbReference>
<dbReference type="PANTHER" id="PTHR30189">
    <property type="entry name" value="LPS-ASSEMBLY PROTEIN"/>
    <property type="match status" value="1"/>
</dbReference>
<dbReference type="PANTHER" id="PTHR30189:SF1">
    <property type="entry name" value="LPS-ASSEMBLY PROTEIN LPTD"/>
    <property type="match status" value="1"/>
</dbReference>
<dbReference type="Pfam" id="PF04453">
    <property type="entry name" value="LptD"/>
    <property type="match status" value="1"/>
</dbReference>
<feature type="signal peptide" evidence="1">
    <location>
        <begin position="1"/>
        <end position="48"/>
    </location>
</feature>
<feature type="chain" id="PRO_5000118484" description="LPS-assembly protein LptD">
    <location>
        <begin position="49"/>
        <end position="824"/>
    </location>
</feature>
<feature type="region of interest" description="Disordered" evidence="2">
    <location>
        <begin position="1"/>
        <end position="26"/>
    </location>
</feature>
<feature type="region of interest" description="Disordered" evidence="2">
    <location>
        <begin position="67"/>
        <end position="117"/>
    </location>
</feature>
<feature type="compositionally biased region" description="Low complexity" evidence="2">
    <location>
        <begin position="98"/>
        <end position="115"/>
    </location>
</feature>
<protein>
    <recommendedName>
        <fullName evidence="1">LPS-assembly protein LptD</fullName>
    </recommendedName>
</protein>
<gene>
    <name evidence="1" type="primary">lptD</name>
    <name type="synonym">imp</name>
    <name type="synonym">ostA</name>
    <name type="ordered locus">Rmet_0436</name>
</gene>